<name>ATPA_STRE4</name>
<accession>C0M718</accession>
<evidence type="ECO:0000255" key="1">
    <source>
        <dbReference type="HAMAP-Rule" id="MF_01346"/>
    </source>
</evidence>
<dbReference type="EC" id="7.1.2.2" evidence="1"/>
<dbReference type="EMBL" id="FM204883">
    <property type="protein sequence ID" value="CAW93434.1"/>
    <property type="molecule type" value="Genomic_DNA"/>
</dbReference>
<dbReference type="RefSeq" id="WP_012679392.1">
    <property type="nucleotide sequence ID" value="NC_012471.1"/>
</dbReference>
<dbReference type="SMR" id="C0M718"/>
<dbReference type="KEGG" id="seu:SEQ_0919"/>
<dbReference type="HOGENOM" id="CLU_010091_2_1_9"/>
<dbReference type="OrthoDB" id="9803053at2"/>
<dbReference type="Proteomes" id="UP000001365">
    <property type="component" value="Chromosome"/>
</dbReference>
<dbReference type="GO" id="GO:0005886">
    <property type="term" value="C:plasma membrane"/>
    <property type="evidence" value="ECO:0007669"/>
    <property type="project" value="UniProtKB-SubCell"/>
</dbReference>
<dbReference type="GO" id="GO:0045259">
    <property type="term" value="C:proton-transporting ATP synthase complex"/>
    <property type="evidence" value="ECO:0007669"/>
    <property type="project" value="UniProtKB-KW"/>
</dbReference>
<dbReference type="GO" id="GO:0043531">
    <property type="term" value="F:ADP binding"/>
    <property type="evidence" value="ECO:0007669"/>
    <property type="project" value="TreeGrafter"/>
</dbReference>
<dbReference type="GO" id="GO:0005524">
    <property type="term" value="F:ATP binding"/>
    <property type="evidence" value="ECO:0007669"/>
    <property type="project" value="UniProtKB-UniRule"/>
</dbReference>
<dbReference type="GO" id="GO:0046933">
    <property type="term" value="F:proton-transporting ATP synthase activity, rotational mechanism"/>
    <property type="evidence" value="ECO:0007669"/>
    <property type="project" value="UniProtKB-UniRule"/>
</dbReference>
<dbReference type="CDD" id="cd18113">
    <property type="entry name" value="ATP-synt_F1_alpha_C"/>
    <property type="match status" value="1"/>
</dbReference>
<dbReference type="CDD" id="cd18116">
    <property type="entry name" value="ATP-synt_F1_alpha_N"/>
    <property type="match status" value="1"/>
</dbReference>
<dbReference type="CDD" id="cd01132">
    <property type="entry name" value="F1-ATPase_alpha_CD"/>
    <property type="match status" value="1"/>
</dbReference>
<dbReference type="FunFam" id="1.20.150.20:FF:000001">
    <property type="entry name" value="ATP synthase subunit alpha"/>
    <property type="match status" value="1"/>
</dbReference>
<dbReference type="FunFam" id="2.40.30.20:FF:000001">
    <property type="entry name" value="ATP synthase subunit alpha"/>
    <property type="match status" value="1"/>
</dbReference>
<dbReference type="FunFam" id="3.40.50.300:FF:000002">
    <property type="entry name" value="ATP synthase subunit alpha"/>
    <property type="match status" value="1"/>
</dbReference>
<dbReference type="Gene3D" id="2.40.30.20">
    <property type="match status" value="1"/>
</dbReference>
<dbReference type="Gene3D" id="1.20.150.20">
    <property type="entry name" value="ATP synthase alpha/beta chain, C-terminal domain"/>
    <property type="match status" value="1"/>
</dbReference>
<dbReference type="Gene3D" id="3.40.50.300">
    <property type="entry name" value="P-loop containing nucleotide triphosphate hydrolases"/>
    <property type="match status" value="1"/>
</dbReference>
<dbReference type="HAMAP" id="MF_01346">
    <property type="entry name" value="ATP_synth_alpha_bact"/>
    <property type="match status" value="1"/>
</dbReference>
<dbReference type="InterPro" id="IPR023366">
    <property type="entry name" value="ATP_synth_asu-like_sf"/>
</dbReference>
<dbReference type="InterPro" id="IPR000793">
    <property type="entry name" value="ATP_synth_asu_C"/>
</dbReference>
<dbReference type="InterPro" id="IPR038376">
    <property type="entry name" value="ATP_synth_asu_C_sf"/>
</dbReference>
<dbReference type="InterPro" id="IPR033732">
    <property type="entry name" value="ATP_synth_F1_a_nt-bd_dom"/>
</dbReference>
<dbReference type="InterPro" id="IPR005294">
    <property type="entry name" value="ATP_synth_F1_asu"/>
</dbReference>
<dbReference type="InterPro" id="IPR004100">
    <property type="entry name" value="ATPase_F1/V1/A1_a/bsu_N"/>
</dbReference>
<dbReference type="InterPro" id="IPR036121">
    <property type="entry name" value="ATPase_F1/V1/A1_a/bsu_N_sf"/>
</dbReference>
<dbReference type="InterPro" id="IPR000194">
    <property type="entry name" value="ATPase_F1/V1/A1_a/bsu_nucl-bd"/>
</dbReference>
<dbReference type="InterPro" id="IPR027417">
    <property type="entry name" value="P-loop_NTPase"/>
</dbReference>
<dbReference type="NCBIfam" id="TIGR00962">
    <property type="entry name" value="atpA"/>
    <property type="match status" value="1"/>
</dbReference>
<dbReference type="NCBIfam" id="NF009884">
    <property type="entry name" value="PRK13343.1"/>
    <property type="match status" value="1"/>
</dbReference>
<dbReference type="PANTHER" id="PTHR48082">
    <property type="entry name" value="ATP SYNTHASE SUBUNIT ALPHA, MITOCHONDRIAL"/>
    <property type="match status" value="1"/>
</dbReference>
<dbReference type="PANTHER" id="PTHR48082:SF2">
    <property type="entry name" value="ATP SYNTHASE SUBUNIT ALPHA, MITOCHONDRIAL"/>
    <property type="match status" value="1"/>
</dbReference>
<dbReference type="Pfam" id="PF00006">
    <property type="entry name" value="ATP-synt_ab"/>
    <property type="match status" value="1"/>
</dbReference>
<dbReference type="Pfam" id="PF00306">
    <property type="entry name" value="ATP-synt_ab_C"/>
    <property type="match status" value="1"/>
</dbReference>
<dbReference type="Pfam" id="PF02874">
    <property type="entry name" value="ATP-synt_ab_N"/>
    <property type="match status" value="1"/>
</dbReference>
<dbReference type="PIRSF" id="PIRSF039088">
    <property type="entry name" value="F_ATPase_subunit_alpha"/>
    <property type="match status" value="1"/>
</dbReference>
<dbReference type="SUPFAM" id="SSF47917">
    <property type="entry name" value="C-terminal domain of alpha and beta subunits of F1 ATP synthase"/>
    <property type="match status" value="1"/>
</dbReference>
<dbReference type="SUPFAM" id="SSF50615">
    <property type="entry name" value="N-terminal domain of alpha and beta subunits of F1 ATP synthase"/>
    <property type="match status" value="1"/>
</dbReference>
<dbReference type="SUPFAM" id="SSF52540">
    <property type="entry name" value="P-loop containing nucleoside triphosphate hydrolases"/>
    <property type="match status" value="1"/>
</dbReference>
<organism>
    <name type="scientific">Streptococcus equi subsp. equi (strain 4047)</name>
    <dbReference type="NCBI Taxonomy" id="553482"/>
    <lineage>
        <taxon>Bacteria</taxon>
        <taxon>Bacillati</taxon>
        <taxon>Bacillota</taxon>
        <taxon>Bacilli</taxon>
        <taxon>Lactobacillales</taxon>
        <taxon>Streptococcaceae</taxon>
        <taxon>Streptococcus</taxon>
    </lineage>
</organism>
<sequence>MAINAQEISALIKKQIENFQPNFDVTETGVVTYIGDGIARARGLDNAMSGELLEFSNGTFGMAQNLESNDVGIIILGDFSTIREGDEVKRTGKIMEVPVGEALIGRVVNPLGQPVDGLGDIETTGFRPVETPAPGVMQRKSVFESLQTGLKAIDALVPIGRGQRELIIGDRQTGKTSVAIDAILNQKGQDMICIYVAIGQKESTVRTQVETLRRYGALDYTIVVTASASQPSPLLFIAPYAGVAMAEEFMYNGKHVLIVYDDLSKQAVAYRELSLLLRRPPGREAYPGDVFYLHSRLLERSAKVSDDLGGGSITALPFIETQAGDISAYIATNVISITDGQIFLQEDLFNSGIRPAIDAGSSVSRVGGSAQIKAMKRVAGTLRLDLASYRELEAFTQFGSDLDAATQAKLNRGRRTVEILKQPLHKPLPVEKQVVILYALTHGFLDDVPVDDILAFEEALYDYFDAHYDHLFETIRTTKDLPQEAELDVAIQAFKAQSNFK</sequence>
<proteinExistence type="inferred from homology"/>
<feature type="chain" id="PRO_1000166555" description="ATP synthase subunit alpha">
    <location>
        <begin position="1"/>
        <end position="501"/>
    </location>
</feature>
<feature type="binding site" evidence="1">
    <location>
        <begin position="169"/>
        <end position="176"/>
    </location>
    <ligand>
        <name>ATP</name>
        <dbReference type="ChEBI" id="CHEBI:30616"/>
    </ligand>
</feature>
<feature type="site" description="Required for activity" evidence="1">
    <location>
        <position position="362"/>
    </location>
</feature>
<keyword id="KW-0066">ATP synthesis</keyword>
<keyword id="KW-0067">ATP-binding</keyword>
<keyword id="KW-1003">Cell membrane</keyword>
<keyword id="KW-0139">CF(1)</keyword>
<keyword id="KW-0375">Hydrogen ion transport</keyword>
<keyword id="KW-0406">Ion transport</keyword>
<keyword id="KW-0472">Membrane</keyword>
<keyword id="KW-0547">Nucleotide-binding</keyword>
<keyword id="KW-1278">Translocase</keyword>
<keyword id="KW-0813">Transport</keyword>
<protein>
    <recommendedName>
        <fullName evidence="1">ATP synthase subunit alpha</fullName>
        <ecNumber evidence="1">7.1.2.2</ecNumber>
    </recommendedName>
    <alternativeName>
        <fullName evidence="1">ATP synthase F1 sector subunit alpha</fullName>
    </alternativeName>
    <alternativeName>
        <fullName evidence="1">F-ATPase subunit alpha</fullName>
    </alternativeName>
</protein>
<reference key="1">
    <citation type="journal article" date="2009" name="PLoS Pathog.">
        <title>Genomic evidence for the evolution of Streptococcus equi: host restriction, increased virulence, and genetic exchange with human pathogens.</title>
        <authorList>
            <person name="Holden M.T.G."/>
            <person name="Heather Z."/>
            <person name="Paillot R."/>
            <person name="Steward K.F."/>
            <person name="Webb K."/>
            <person name="Ainslie F."/>
            <person name="Jourdan T."/>
            <person name="Bason N.C."/>
            <person name="Holroyd N.E."/>
            <person name="Mungall K."/>
            <person name="Quail M.A."/>
            <person name="Sanders M."/>
            <person name="Simmonds M."/>
            <person name="Willey D."/>
            <person name="Brooks K."/>
            <person name="Aanensen D.M."/>
            <person name="Spratt B.G."/>
            <person name="Jolley K.A."/>
            <person name="Maiden M.C.J."/>
            <person name="Kehoe M."/>
            <person name="Chanter N."/>
            <person name="Bentley S.D."/>
            <person name="Robinson C."/>
            <person name="Maskell D.J."/>
            <person name="Parkhill J."/>
            <person name="Waller A.S."/>
        </authorList>
    </citation>
    <scope>NUCLEOTIDE SEQUENCE [LARGE SCALE GENOMIC DNA]</scope>
    <source>
        <strain>4047</strain>
    </source>
</reference>
<comment type="function">
    <text evidence="1">Produces ATP from ADP in the presence of a proton gradient across the membrane. The alpha chain is a regulatory subunit.</text>
</comment>
<comment type="catalytic activity">
    <reaction evidence="1">
        <text>ATP + H2O + 4 H(+)(in) = ADP + phosphate + 5 H(+)(out)</text>
        <dbReference type="Rhea" id="RHEA:57720"/>
        <dbReference type="ChEBI" id="CHEBI:15377"/>
        <dbReference type="ChEBI" id="CHEBI:15378"/>
        <dbReference type="ChEBI" id="CHEBI:30616"/>
        <dbReference type="ChEBI" id="CHEBI:43474"/>
        <dbReference type="ChEBI" id="CHEBI:456216"/>
        <dbReference type="EC" id="7.1.2.2"/>
    </reaction>
</comment>
<comment type="subunit">
    <text evidence="1">F-type ATPases have 2 components, CF(1) - the catalytic core - and CF(0) - the membrane proton channel. CF(1) has five subunits: alpha(3), beta(3), gamma(1), delta(1), epsilon(1). CF(0) has three main subunits: a(1), b(2) and c(9-12). The alpha and beta chains form an alternating ring which encloses part of the gamma chain. CF(1) is attached to CF(0) by a central stalk formed by the gamma and epsilon chains, while a peripheral stalk is formed by the delta and b chains.</text>
</comment>
<comment type="subcellular location">
    <subcellularLocation>
        <location evidence="1">Cell membrane</location>
        <topology evidence="1">Peripheral membrane protein</topology>
    </subcellularLocation>
</comment>
<comment type="similarity">
    <text evidence="1">Belongs to the ATPase alpha/beta chains family.</text>
</comment>
<gene>
    <name evidence="1" type="primary">atpA</name>
    <name type="ordered locus">SEQ_0919</name>
</gene>